<proteinExistence type="evidence at transcript level"/>
<protein>
    <recommendedName>
        <fullName>Movement protein</fullName>
    </recommendedName>
    <alternativeName>
        <fullName>30 kDa protein</fullName>
    </alternativeName>
    <alternativeName>
        <fullName>Cell-to-cell transport protein</fullName>
    </alternativeName>
</protein>
<keyword id="KW-1031">Host cell junction</keyword>
<keyword id="KW-1035">Host cytoplasm</keyword>
<keyword id="KW-1037">Host cytoskeleton</keyword>
<keyword id="KW-0694">RNA-binding</keyword>
<keyword id="KW-0813">Transport</keyword>
<keyword id="KW-0916">Viral movement protein</keyword>
<sequence>MALVVKDDVKISEFINLSAAEKFLPAVMTSVKTVRISKVDKVIAMENDSLSDVDLLKGVKLVKDGYVCLAGLVVSGEWNLPDNCRGGVSVCLVDKRMQRDDEATLGSYRTSAAKKRFAFKLIPNYSITTADAERKVWQVLVNIRGVAMEKGFCPLSLEFVSVCIVHKSNIKLGLREKITSVSEGGPVELTEAVVDEFIESVPMADRLRKFRNQSKKGSNKYVGKRNDNKGLNKEGKLFDKVRIGQNSESSDAESSSF</sequence>
<accession>P89658</accession>
<dbReference type="EMBL" id="AB000709">
    <property type="protein sequence ID" value="BAA19168.1"/>
    <property type="molecule type" value="mRNA"/>
</dbReference>
<dbReference type="Proteomes" id="UP000000475">
    <property type="component" value="Genome"/>
</dbReference>
<dbReference type="GO" id="GO:0030430">
    <property type="term" value="C:host cell cytoplasm"/>
    <property type="evidence" value="ECO:0007669"/>
    <property type="project" value="UniProtKB-KW"/>
</dbReference>
<dbReference type="GO" id="GO:0044219">
    <property type="term" value="C:host cell plasmodesma"/>
    <property type="evidence" value="ECO:0007669"/>
    <property type="project" value="UniProtKB-SubCell"/>
</dbReference>
<dbReference type="GO" id="GO:0044163">
    <property type="term" value="C:host cytoskeleton"/>
    <property type="evidence" value="ECO:0007669"/>
    <property type="project" value="UniProtKB-SubCell"/>
</dbReference>
<dbReference type="GO" id="GO:0003723">
    <property type="term" value="F:RNA binding"/>
    <property type="evidence" value="ECO:0007669"/>
    <property type="project" value="UniProtKB-KW"/>
</dbReference>
<dbReference type="GO" id="GO:0046740">
    <property type="term" value="P:transport of virus in host, cell to cell"/>
    <property type="evidence" value="ECO:0007669"/>
    <property type="project" value="UniProtKB-KW"/>
</dbReference>
<dbReference type="InterPro" id="IPR001022">
    <property type="entry name" value="TMV_movement"/>
</dbReference>
<dbReference type="InterPro" id="IPR028919">
    <property type="entry name" value="Viral_movement"/>
</dbReference>
<dbReference type="Pfam" id="PF01107">
    <property type="entry name" value="MP"/>
    <property type="match status" value="1"/>
</dbReference>
<dbReference type="PRINTS" id="PR00964">
    <property type="entry name" value="MOVEMENT"/>
</dbReference>
<organismHost>
    <name type="scientific">Vicia faba</name>
    <name type="common">Broad bean</name>
    <name type="synonym">Faba vulgaris</name>
    <dbReference type="NCBI Taxonomy" id="3906"/>
</organismHost>
<reference key="1">
    <citation type="journal article" date="1997" name="Nihon Shokubutsu Byori Gakkaiho">
        <title>Nucleotide sequence of the Japanese isolate of pepper [Capsicum annuum] mild mottle tobamovirus (TMV-P) RNA.</title>
        <authorList>
            <person name="Kirita M."/>
            <person name="Akutsu K."/>
            <person name="Watanabe Y."/>
            <person name="Tsuda S."/>
        </authorList>
    </citation>
    <scope>NUCLEOTIDE SEQUENCE [MRNA]</scope>
</reference>
<organism>
    <name type="scientific">Pepper mild mottle virus (strain Japan)</name>
    <name type="common">PMMV-J</name>
    <dbReference type="NCBI Taxonomy" id="138663"/>
    <lineage>
        <taxon>Viruses</taxon>
        <taxon>Riboviria</taxon>
        <taxon>Orthornavirae</taxon>
        <taxon>Kitrinoviricota</taxon>
        <taxon>Alsuviricetes</taxon>
        <taxon>Martellivirales</taxon>
        <taxon>Virgaviridae</taxon>
        <taxon>Tobamovirus</taxon>
        <taxon>Pepper mild mottle virus</taxon>
    </lineage>
</organism>
<feature type="chain" id="PRO_0000144962" description="Movement protein">
    <location>
        <begin position="1"/>
        <end position="257"/>
    </location>
</feature>
<feature type="region of interest" description="Disordered" evidence="3">
    <location>
        <begin position="212"/>
        <end position="257"/>
    </location>
</feature>
<feature type="compositionally biased region" description="Basic and acidic residues" evidence="3">
    <location>
        <begin position="224"/>
        <end position="242"/>
    </location>
</feature>
<feature type="compositionally biased region" description="Low complexity" evidence="3">
    <location>
        <begin position="247"/>
        <end position="257"/>
    </location>
</feature>
<evidence type="ECO:0000250" key="1">
    <source>
        <dbReference type="UniProtKB" id="P03583"/>
    </source>
</evidence>
<evidence type="ECO:0000250" key="2">
    <source>
        <dbReference type="UniProtKB" id="P69513"/>
    </source>
</evidence>
<evidence type="ECO:0000256" key="3">
    <source>
        <dbReference type="SAM" id="MobiDB-lite"/>
    </source>
</evidence>
<evidence type="ECO:0000305" key="4"/>
<gene>
    <name type="primary">MP</name>
</gene>
<comment type="function">
    <text evidence="1 2">Transports viral genome to neighboring plant cells directly through plasmosdesmata, without any budding. The movement protein allows efficient cell to cell propagation, by bypassing the host cell wall barrier. Forms a ribonucleoprotein complex with viral RNA. Binds microtubules and modulates microtubule stability. Can bind double-stranded DNA.</text>
</comment>
<comment type="subcellular location">
    <subcellularLocation>
        <location evidence="2">Host cytoplasm</location>
        <location evidence="2">Host cytoskeleton</location>
    </subcellularLocation>
    <subcellularLocation>
        <location evidence="2">Host cell junction</location>
        <location evidence="2">Host plasmodesma</location>
    </subcellularLocation>
</comment>
<comment type="similarity">
    <text evidence="4">Belongs to the tobamovirus movement protein family.</text>
</comment>
<name>MVP_PMMVJ</name>